<protein>
    <recommendedName>
        <fullName>HD protein homolog</fullName>
    </recommendedName>
</protein>
<proteinExistence type="inferred from homology"/>
<keyword id="KW-0963">Cytoplasm</keyword>
<keyword id="KW-0539">Nucleus</keyword>
<keyword id="KW-1185">Reference proteome</keyword>
<keyword id="KW-0813">Transport</keyword>
<reference key="1">
    <citation type="journal article" date="2002" name="Nature">
        <title>Sequence and analysis of chromosome 2 of Dictyostelium discoideum.</title>
        <authorList>
            <person name="Gloeckner G."/>
            <person name="Eichinger L."/>
            <person name="Szafranski K."/>
            <person name="Pachebat J.A."/>
            <person name="Bankier A.T."/>
            <person name="Dear P.H."/>
            <person name="Lehmann R."/>
            <person name="Baumgart C."/>
            <person name="Parra G."/>
            <person name="Abril J.F."/>
            <person name="Guigo R."/>
            <person name="Kumpf K."/>
            <person name="Tunggal B."/>
            <person name="Cox E.C."/>
            <person name="Quail M.A."/>
            <person name="Platzer M."/>
            <person name="Rosenthal A."/>
            <person name="Noegel A.A."/>
        </authorList>
    </citation>
    <scope>NUCLEOTIDE SEQUENCE [LARGE SCALE GENOMIC DNA]</scope>
    <source>
        <strain>AX4</strain>
    </source>
</reference>
<reference key="2">
    <citation type="journal article" date="2005" name="Nature">
        <title>The genome of the social amoeba Dictyostelium discoideum.</title>
        <authorList>
            <person name="Eichinger L."/>
            <person name="Pachebat J.A."/>
            <person name="Gloeckner G."/>
            <person name="Rajandream M.A."/>
            <person name="Sucgang R."/>
            <person name="Berriman M."/>
            <person name="Song J."/>
            <person name="Olsen R."/>
            <person name="Szafranski K."/>
            <person name="Xu Q."/>
            <person name="Tunggal B."/>
            <person name="Kummerfeld S."/>
            <person name="Madera M."/>
            <person name="Konfortov B.A."/>
            <person name="Rivero F."/>
            <person name="Bankier A.T."/>
            <person name="Lehmann R."/>
            <person name="Hamlin N."/>
            <person name="Davies R."/>
            <person name="Gaudet P."/>
            <person name="Fey P."/>
            <person name="Pilcher K."/>
            <person name="Chen G."/>
            <person name="Saunders D."/>
            <person name="Sodergren E.J."/>
            <person name="Davis P."/>
            <person name="Kerhornou A."/>
            <person name="Nie X."/>
            <person name="Hall N."/>
            <person name="Anjard C."/>
            <person name="Hemphill L."/>
            <person name="Bason N."/>
            <person name="Farbrother P."/>
            <person name="Desany B."/>
            <person name="Just E."/>
            <person name="Morio T."/>
            <person name="Rost R."/>
            <person name="Churcher C.M."/>
            <person name="Cooper J."/>
            <person name="Haydock S."/>
            <person name="van Driessche N."/>
            <person name="Cronin A."/>
            <person name="Goodhead I."/>
            <person name="Muzny D.M."/>
            <person name="Mourier T."/>
            <person name="Pain A."/>
            <person name="Lu M."/>
            <person name="Harper D."/>
            <person name="Lindsay R."/>
            <person name="Hauser H."/>
            <person name="James K.D."/>
            <person name="Quiles M."/>
            <person name="Madan Babu M."/>
            <person name="Saito T."/>
            <person name="Buchrieser C."/>
            <person name="Wardroper A."/>
            <person name="Felder M."/>
            <person name="Thangavelu M."/>
            <person name="Johnson D."/>
            <person name="Knights A."/>
            <person name="Loulseged H."/>
            <person name="Mungall K.L."/>
            <person name="Oliver K."/>
            <person name="Price C."/>
            <person name="Quail M.A."/>
            <person name="Urushihara H."/>
            <person name="Hernandez J."/>
            <person name="Rabbinowitsch E."/>
            <person name="Steffen D."/>
            <person name="Sanders M."/>
            <person name="Ma J."/>
            <person name="Kohara Y."/>
            <person name="Sharp S."/>
            <person name="Simmonds M.N."/>
            <person name="Spiegler S."/>
            <person name="Tivey A."/>
            <person name="Sugano S."/>
            <person name="White B."/>
            <person name="Walker D."/>
            <person name="Woodward J.R."/>
            <person name="Winckler T."/>
            <person name="Tanaka Y."/>
            <person name="Shaulsky G."/>
            <person name="Schleicher M."/>
            <person name="Weinstock G.M."/>
            <person name="Rosenthal A."/>
            <person name="Cox E.C."/>
            <person name="Chisholm R.L."/>
            <person name="Gibbs R.A."/>
            <person name="Loomis W.F."/>
            <person name="Platzer M."/>
            <person name="Kay R.R."/>
            <person name="Williams J.G."/>
            <person name="Dear P.H."/>
            <person name="Noegel A.A."/>
            <person name="Barrell B.G."/>
            <person name="Kuspa A."/>
        </authorList>
    </citation>
    <scope>NUCLEOTIDE SEQUENCE [LARGE SCALE GENOMIC DNA]</scope>
    <source>
        <strain>AX4</strain>
    </source>
</reference>
<comment type="function">
    <text evidence="1">May play a role in microtubule-mediated transport or vesicle function.</text>
</comment>
<comment type="subcellular location">
    <subcellularLocation>
        <location evidence="1">Cytoplasm</location>
    </subcellularLocation>
    <subcellularLocation>
        <location evidence="1">Nucleus</location>
    </subcellularLocation>
</comment>
<comment type="similarity">
    <text evidence="3">Belongs to the huntingtin family.</text>
</comment>
<gene>
    <name type="primary">htt</name>
    <name type="synonym">hd</name>
    <name type="ORF">DDB_G0272344</name>
</gene>
<sequence>MDLIRGLDILSASPIDTEDQNLRKEKIEACRTISEQICAPSLRNTADFPRFLSIAISLLLRAHGDKDLNVYSVAEESLNRTIKILVYSYHERILFELFKVLKGKPHQHNNEKRLSTNLTDHLSQNSVTPSVPTTPNYQQSPSTQSPSHSTSNSSNNLYNNFSSNSNSNSNSNSNSSSNNNSGNTTPGNNTNNSNGNANSIFNTANQILSKPFPLKSQRIALIKFGEICSFIRPSKCRKYILSLVPPINSLLSIIEDESLQESISISMENISKILIPYLKENEVHQLIDLFSRNLQQPSAAVRRAASLSITSICRYHPRPLFEFTIEFLYNFTFPNSPPISSITSASCIPASSNTNTLQNSKILGVLFSYLQLIKLAEELSSNDIKILDGFSLKIQFFVHFILKYIQVPIDGEPYDHNIVGLSLELLQQLLVTFGPYEYSWPKPLVREVIAQLRHLCFNQQSSIRVSLKAVVLNCLAQSVKFFPKLFNDEFFKHQPSTIDSNTVTSAEDHICRDYLLNISPSDLNFKLFTPITQQQQQQQQQQQQQQQQQQQHNLTSSTMSGINSTTGVSNHTFSLEPKEEFLYYLNDSDPLLRGGTALMIGCLIRGYLETDHITSNQIYPTNIALLEDNLSIPTLLIFLLRALMDSSSITAKLACTGISECLPILSQSKFSDWALVTLRHLLCVSSSTYWLVKLEILETLSMIDYIVIEYLEQNIQQKSNVMNVVINGPNLSISTSSIKINENNNNSNNSNNNKNNSETGGAVAIPIQSKVLDFLIEQLSDNDFRVRNSAGKSLVRVIPKLVFTAPLERHSMKGISSKVRETFDVQDYENTVLRKRKIFANLSHVIGLLVNQLSNPHPDDKIRGCYGALNLICKTYSFPPDTPEQCRTLSSVLANPMLSFVGDILPLALDRVGLTWVATDFDVHIDIIEILGYLSRGAENVLGTYCHNVLRHIVRIINIATNIIQFRPTPPLKEVKSNPSGIHVNSPLLKAPTHLGSFTHSIHYIKLYSKLLTARINSITIFGIDRFSQLRQACFETLSVMLKCAGKTILPYTEEIIGYLTTHFEQEPVSVIKCINELFLVTMKPTPIVSISSLSQKSRDLNIGGGFISTGGGGGGGSGGINSSSSSLKQYEPRSIESHSSSSNSHDEMFLNSRSVFSSLLTFGTPNLKQHYDFINEVPSSHNINYSYSNSEINRIISNEDRKLNFKLFEPLIIGSMIEYQTTHSHELKIAILLMLSKLSKFGLDLSLFDKENHFPTYFIEELKETHCLLSKPNQVLSYSYDLLGSMFIYRKLFPDSSVSIDDIKKLFFQPPPQQQQQTNQNKSQSLNSTPNISSNNNNNNNNNNNNNNNNNNNNNNNSNSSQSLNNSTVIGNNSSHPYSYTIPTIIENCHSFVRYLYDPNDKYPDTDFRERFLSFLLSNLQYSQTIDILILIVTIVQPNSTLHQKFSQQISHQLFTNLSLGDSPFFIINSIEEVERLYVLIDKLHSSSLSAARWADALLSVSPQFVNKSTSSSSSSSSTATSPSSSSSSTTTTTTTSTNTTTTTPSDPLIRKRILLLRESILEAYELRWLPPLLVLLRTGCKLPEEARISAARQSRFLSNHDNKHQPGPSAAIISTLLLKLIRNAVSVFSLYKPKNVLFTQLINHLLYYSSIFFNKNLVPHISAQSLSNSPNFGATNTTTGSGSVSPLSSSSSSTITVTTMAMGSSLMKQPSSSLLLSPTVGGSSSTINLFMDSLKGILALDNGTIIQEITTSLLSYGGTSTSIHAVKLLLLLGRLPNQQVIEGADLVWKQYALSNNWQSCGCEHFLTHHIIFLLYCQSIVVLKSQNIELSETFLDKIVLLINESTVKKLIEFLVKGGSNSDQNQYIEIFTQHLVKIFSRVSNSLDLRKKQKLLRLLSYLPANRETLELLIVNFLQTDDISLQVSGERILNLNINNLIETYGPQNSLEIIQELYQIFMSNFVKSTTNQSVQSLFLKLIKNLSPSSAYQGITPTHNNVIEKLKEKELTNNNNNNNNNIIEKEEEEKEKEKEKVKEEEEGNNIEKLIQLQIETIKKNNQISDLKTVPWDYFVELIKSRYYSNNLNQHSFNNISILSQIDKDATISLLESKSLDGTLLPAFISSVYSLEFQDEIQAYLLKKVDTLLGLAGEIGTDPLKGGPPFLSDSVWDELRETTRCLSNFINKFGLGELCESKLLKVSTWAFIESFRRWRAEIINPYDFKLVLELSRSIILKSTASILTITDDSEWCSLLLCLYKLYCLVIRPHFGYISGQRELEENFSQDPTQISLTQSNEMIKFLVSLLTNVKSYTPMPGSHIGQLIFDSFIRAIIPLSTKAFDFIYPTVSTSSEDEFGGGIIPNCPIFSSNVSPEQNIKALVSFIHFVDIDDEFKFKQIWEMLEPIFVSPLGDAEMGSDEITEECKCLSLSGMATMIIKVCFEVTGVNSQVNLLETSTIPKSTYNHIPREKDLMFLNTPTGKKLNHLLSTIYGDMPQSELPLGGAIESVSSSSSMFGESSGNHQNMSSSSLSAYHFNIERSFSSNQFGSDQISLSDLRLFKTPYFIGVNFTPIIQKLLESFESFLVNPMCPPMLKKDILKSTVLLSDLFNREQVIWMFKTFTTIYAQDEIDDFLLKQHLILGICKGIAILQTPPNVGDSNAHSVGIFEMLKSALDHQNISLQVSALDGILYLLEGKVNKYIQGSLLQFLFRWIPTRLSSVPFPPVSLTLRVLATMFLMIEQYSREAEETLFTKRAVTTCIQLGQQQSTPVPIVYGVFRGLDRLLVSFSLSHSQRELISHFSLKSLPSENPIRSLLALGLMVTCIYTGDETGINSPSFTKSSISSIGSGGVNSLTAFEGSFSSSSIESPLNSALDSVMSSFIMDDNYSGSGGNSLINGGGGGDPLSSLDRQKFSRVNNMEKVKMLFDKIRLVSHFSYESHVLSEVLPVVIVDLFPSVDQVLSFILGEFLKQSKTNSKLMCQIISKVFDFLVENDTSENTNQHLINYWIIICLQNFFQIQNPTHCLWALTYLFLTSSPKRSFKLLESEFASKIQTNEKLFIIIASEFYFNKELSKENKQLFKDSFSKLKIEPYISLLKVINTTQ</sequence>
<accession>Q76P24</accession>
<accession>Q55A25</accession>
<name>HD_DICDI</name>
<organism>
    <name type="scientific">Dictyostelium discoideum</name>
    <name type="common">Social amoeba</name>
    <dbReference type="NCBI Taxonomy" id="44689"/>
    <lineage>
        <taxon>Eukaryota</taxon>
        <taxon>Amoebozoa</taxon>
        <taxon>Evosea</taxon>
        <taxon>Eumycetozoa</taxon>
        <taxon>Dictyostelia</taxon>
        <taxon>Dictyosteliales</taxon>
        <taxon>Dictyosteliaceae</taxon>
        <taxon>Dictyostelium</taxon>
    </lineage>
</organism>
<feature type="chain" id="PRO_0000393721" description="HD protein homolog">
    <location>
        <begin position="1"/>
        <end position="3095"/>
    </location>
</feature>
<feature type="region of interest" description="Disordered" evidence="2">
    <location>
        <begin position="105"/>
        <end position="197"/>
    </location>
</feature>
<feature type="region of interest" description="Disordered" evidence="2">
    <location>
        <begin position="536"/>
        <end position="561"/>
    </location>
</feature>
<feature type="region of interest" description="Disordered" evidence="2">
    <location>
        <begin position="1312"/>
        <end position="1371"/>
    </location>
</feature>
<feature type="region of interest" description="Disordered" evidence="2">
    <location>
        <begin position="1509"/>
        <end position="1547"/>
    </location>
</feature>
<feature type="region of interest" description="Disordered" evidence="2">
    <location>
        <begin position="2005"/>
        <end position="2037"/>
    </location>
</feature>
<feature type="compositionally biased region" description="Polar residues" evidence="2">
    <location>
        <begin position="115"/>
        <end position="139"/>
    </location>
</feature>
<feature type="compositionally biased region" description="Low complexity" evidence="2">
    <location>
        <begin position="140"/>
        <end position="197"/>
    </location>
</feature>
<feature type="compositionally biased region" description="Low complexity" evidence="2">
    <location>
        <begin position="536"/>
        <end position="551"/>
    </location>
</feature>
<feature type="compositionally biased region" description="Polar residues" evidence="2">
    <location>
        <begin position="552"/>
        <end position="561"/>
    </location>
</feature>
<feature type="compositionally biased region" description="Low complexity" evidence="2">
    <location>
        <begin position="1315"/>
        <end position="1368"/>
    </location>
</feature>
<feature type="compositionally biased region" description="Low complexity" evidence="2">
    <location>
        <begin position="1510"/>
        <end position="1547"/>
    </location>
</feature>
<feature type="compositionally biased region" description="Low complexity" evidence="2">
    <location>
        <begin position="2008"/>
        <end position="2018"/>
    </location>
</feature>
<dbReference type="EMBL" id="AAFI02000008">
    <property type="protein sequence ID" value="EAL71324.1"/>
    <property type="molecule type" value="Genomic_DNA"/>
</dbReference>
<dbReference type="RefSeq" id="XP_645159.1">
    <property type="nucleotide sequence ID" value="XM_640067.1"/>
</dbReference>
<dbReference type="SMR" id="Q76P24"/>
<dbReference type="FunCoup" id="Q76P24">
    <property type="interactions" value="177"/>
</dbReference>
<dbReference type="STRING" id="44689.Q76P24"/>
<dbReference type="GlyGen" id="Q76P24">
    <property type="glycosylation" value="2 sites"/>
</dbReference>
<dbReference type="PaxDb" id="44689-DDB0238473"/>
<dbReference type="EnsemblProtists" id="EAL71324">
    <property type="protein sequence ID" value="EAL71324"/>
    <property type="gene ID" value="DDB_G0272344"/>
</dbReference>
<dbReference type="GeneID" id="8618330"/>
<dbReference type="KEGG" id="ddi:DDB_G0272344"/>
<dbReference type="dictyBase" id="DDB_G0272344">
    <property type="gene designation" value="htt"/>
</dbReference>
<dbReference type="VEuPathDB" id="AmoebaDB:DDB_G0272344"/>
<dbReference type="eggNOG" id="ENOG502QR1D">
    <property type="taxonomic scope" value="Eukaryota"/>
</dbReference>
<dbReference type="HOGENOM" id="CLU_225804_0_0_1"/>
<dbReference type="InParanoid" id="Q76P24"/>
<dbReference type="OMA" id="PNKMEEP"/>
<dbReference type="PRO" id="PR:Q76P24"/>
<dbReference type="Proteomes" id="UP000002195">
    <property type="component" value="Chromosome 2"/>
</dbReference>
<dbReference type="GO" id="GO:0005737">
    <property type="term" value="C:cytoplasm"/>
    <property type="evidence" value="ECO:0000314"/>
    <property type="project" value="dictyBase"/>
</dbReference>
<dbReference type="GO" id="GO:0005634">
    <property type="term" value="C:nucleus"/>
    <property type="evidence" value="ECO:0000314"/>
    <property type="project" value="dictyBase"/>
</dbReference>
<dbReference type="GO" id="GO:0017020">
    <property type="term" value="F:myosin phosphatase regulator activity"/>
    <property type="evidence" value="ECO:0000314"/>
    <property type="project" value="dictyBase"/>
</dbReference>
<dbReference type="GO" id="GO:0140582">
    <property type="term" value="P:adenylate cyclase-activating G protein-coupled cAMP receptor signaling pathway"/>
    <property type="evidence" value="ECO:0000315"/>
    <property type="project" value="dictyBase"/>
</dbReference>
<dbReference type="GO" id="GO:0016339">
    <property type="term" value="P:calcium-dependent cell-cell adhesion via plasma membrane cell adhesion molecules"/>
    <property type="evidence" value="ECO:0000315"/>
    <property type="project" value="dictyBase"/>
</dbReference>
<dbReference type="GO" id="GO:0030154">
    <property type="term" value="P:cell differentiation"/>
    <property type="evidence" value="ECO:0000315"/>
    <property type="project" value="dictyBase"/>
</dbReference>
<dbReference type="GO" id="GO:0006935">
    <property type="term" value="P:chemotaxis"/>
    <property type="evidence" value="ECO:0000315"/>
    <property type="project" value="dictyBase"/>
</dbReference>
<dbReference type="GO" id="GO:0043327">
    <property type="term" value="P:chemotaxis to cAMP"/>
    <property type="evidence" value="ECO:0000315"/>
    <property type="project" value="dictyBase"/>
</dbReference>
<dbReference type="GO" id="GO:0006971">
    <property type="term" value="P:hypotonic response"/>
    <property type="evidence" value="ECO:0000315"/>
    <property type="project" value="dictyBase"/>
</dbReference>
<dbReference type="GO" id="GO:0061952">
    <property type="term" value="P:midbody abscission"/>
    <property type="evidence" value="ECO:0000315"/>
    <property type="project" value="dictyBase"/>
</dbReference>
<dbReference type="GO" id="GO:0055080">
    <property type="term" value="P:monoatomic cation homeostasis"/>
    <property type="evidence" value="ECO:0000315"/>
    <property type="project" value="dictyBase"/>
</dbReference>
<dbReference type="GO" id="GO:0010628">
    <property type="term" value="P:positive regulation of gene expression"/>
    <property type="evidence" value="ECO:0000315"/>
    <property type="project" value="dictyBase"/>
</dbReference>
<dbReference type="GO" id="GO:1902463">
    <property type="term" value="P:protein localization to cell leading edge"/>
    <property type="evidence" value="ECO:0000315"/>
    <property type="project" value="dictyBase"/>
</dbReference>
<dbReference type="GO" id="GO:0060176">
    <property type="term" value="P:regulation of aggregation involved in sorocarp development"/>
    <property type="evidence" value="ECO:0000315"/>
    <property type="project" value="dictyBase"/>
</dbReference>
<dbReference type="GO" id="GO:0043520">
    <property type="term" value="P:regulation of myosin II filament assembly"/>
    <property type="evidence" value="ECO:0000315"/>
    <property type="project" value="dictyBase"/>
</dbReference>
<dbReference type="GO" id="GO:0031156">
    <property type="term" value="P:regulation of sorocarp development"/>
    <property type="evidence" value="ECO:0000315"/>
    <property type="project" value="dictyBase"/>
</dbReference>
<dbReference type="GO" id="GO:0051592">
    <property type="term" value="P:response to calcium ion"/>
    <property type="evidence" value="ECO:0000315"/>
    <property type="project" value="dictyBase"/>
</dbReference>
<dbReference type="GO" id="GO:0035864">
    <property type="term" value="P:response to potassium ion"/>
    <property type="evidence" value="ECO:0000315"/>
    <property type="project" value="dictyBase"/>
</dbReference>
<dbReference type="GO" id="GO:0031149">
    <property type="term" value="P:sorocarp stalk cell differentiation"/>
    <property type="evidence" value="ECO:0000315"/>
    <property type="project" value="dictyBase"/>
</dbReference>
<dbReference type="GO" id="GO:0006412">
    <property type="term" value="P:translation"/>
    <property type="evidence" value="ECO:0000315"/>
    <property type="project" value="dictyBase"/>
</dbReference>
<dbReference type="Gene3D" id="1.25.10.10">
    <property type="entry name" value="Leucine-rich Repeat Variant"/>
    <property type="match status" value="2"/>
</dbReference>
<dbReference type="InterPro" id="IPR011989">
    <property type="entry name" value="ARM-like"/>
</dbReference>
<dbReference type="InterPro" id="IPR016024">
    <property type="entry name" value="ARM-type_fold"/>
</dbReference>
<dbReference type="InterPro" id="IPR048413">
    <property type="entry name" value="Htt_C-HEAT_rpt"/>
</dbReference>
<dbReference type="InterPro" id="IPR048411">
    <property type="entry name" value="Htt_N_HEAT_rpt-1"/>
</dbReference>
<dbReference type="InterPro" id="IPR028426">
    <property type="entry name" value="Huntingtin_fam"/>
</dbReference>
<dbReference type="InterPro" id="IPR024613">
    <property type="entry name" value="Huntingtin_N_HEAT_rpt-2"/>
</dbReference>
<dbReference type="PANTHER" id="PTHR10170:SF10">
    <property type="entry name" value="HUNTINGTIN"/>
    <property type="match status" value="1"/>
</dbReference>
<dbReference type="PANTHER" id="PTHR10170">
    <property type="entry name" value="HUNTINGTON DISEASE PROTEIN"/>
    <property type="match status" value="1"/>
</dbReference>
<dbReference type="Pfam" id="PF20927">
    <property type="entry name" value="Htt_C-HEAT"/>
    <property type="match status" value="2"/>
</dbReference>
<dbReference type="Pfam" id="PF12372">
    <property type="entry name" value="Htt_N-HEAT"/>
    <property type="match status" value="1"/>
</dbReference>
<dbReference type="Pfam" id="PF20926">
    <property type="entry name" value="Htt_N-HEAT_1"/>
    <property type="match status" value="1"/>
</dbReference>
<dbReference type="SUPFAM" id="SSF48371">
    <property type="entry name" value="ARM repeat"/>
    <property type="match status" value="2"/>
</dbReference>
<evidence type="ECO:0000250" key="1"/>
<evidence type="ECO:0000256" key="2">
    <source>
        <dbReference type="SAM" id="MobiDB-lite"/>
    </source>
</evidence>
<evidence type="ECO:0000305" key="3"/>